<reference key="1">
    <citation type="journal article" date="2006" name="Genome Biol.">
        <title>The genome of Rhizobium leguminosarum has recognizable core and accessory components.</title>
        <authorList>
            <person name="Young J.P.W."/>
            <person name="Crossman L.C."/>
            <person name="Johnston A.W.B."/>
            <person name="Thomson N.R."/>
            <person name="Ghazoui Z.F."/>
            <person name="Hull K.H."/>
            <person name="Wexler M."/>
            <person name="Curson A.R.J."/>
            <person name="Todd J.D."/>
            <person name="Poole P.S."/>
            <person name="Mauchline T.H."/>
            <person name="East A.K."/>
            <person name="Quail M.A."/>
            <person name="Churcher C."/>
            <person name="Arrowsmith C."/>
            <person name="Cherevach I."/>
            <person name="Chillingworth T."/>
            <person name="Clarke K."/>
            <person name="Cronin A."/>
            <person name="Davis P."/>
            <person name="Fraser A."/>
            <person name="Hance Z."/>
            <person name="Hauser H."/>
            <person name="Jagels K."/>
            <person name="Moule S."/>
            <person name="Mungall K."/>
            <person name="Norbertczak H."/>
            <person name="Rabbinowitsch E."/>
            <person name="Sanders M."/>
            <person name="Simmonds M."/>
            <person name="Whitehead S."/>
            <person name="Parkhill J."/>
        </authorList>
    </citation>
    <scope>NUCLEOTIDE SEQUENCE [LARGE SCALE GENOMIC DNA]</scope>
    <source>
        <strain>DSM 114642 / LMG 32736 / 3841</strain>
    </source>
</reference>
<protein>
    <recommendedName>
        <fullName evidence="1">ATP synthase subunit a</fullName>
    </recommendedName>
    <alternativeName>
        <fullName evidence="1">ATP synthase F0 sector subunit a</fullName>
    </alternativeName>
    <alternativeName>
        <fullName evidence="1">F-ATPase subunit 6</fullName>
    </alternativeName>
</protein>
<evidence type="ECO:0000255" key="1">
    <source>
        <dbReference type="HAMAP-Rule" id="MF_01393"/>
    </source>
</evidence>
<organism>
    <name type="scientific">Rhizobium johnstonii (strain DSM 114642 / LMG 32736 / 3841)</name>
    <name type="common">Rhizobium leguminosarum bv. viciae</name>
    <dbReference type="NCBI Taxonomy" id="216596"/>
    <lineage>
        <taxon>Bacteria</taxon>
        <taxon>Pseudomonadati</taxon>
        <taxon>Pseudomonadota</taxon>
        <taxon>Alphaproteobacteria</taxon>
        <taxon>Hyphomicrobiales</taxon>
        <taxon>Rhizobiaceae</taxon>
        <taxon>Rhizobium/Agrobacterium group</taxon>
        <taxon>Rhizobium</taxon>
        <taxon>Rhizobium johnstonii</taxon>
    </lineage>
</organism>
<sequence length="250" mass="26727">MSSDPTHQFLIQKIVPIEIGGIDFSFTNASLFMAASAAIAAGFLYFATSNRAIVPGRSQSVAEIFYEFIAKMLTEGAGKQGMQFFPLVFSLFMFVLTANLLGMFPYFFTVTSQIIVTAALAILVIGTVVVYGFYKHGFKFLNVFVPSGVPGILLPLVVTIEIISFLSRPISLSVRLFANMLAGHITLKVFAGFVASLGALGAVGVGGAVLPLIMTVALTGLEFLVAFLQAYVFAVLTCMYLNDAIHPGGH</sequence>
<comment type="function">
    <text evidence="1">Key component of the proton channel; it plays a direct role in the translocation of protons across the membrane.</text>
</comment>
<comment type="subunit">
    <text evidence="1">F-type ATPases have 2 components, CF(1) - the catalytic core - and CF(0) - the membrane proton channel. CF(1) has five subunits: alpha(3), beta(3), gamma(1), delta(1), epsilon(1). CF(0) has three main subunits: a(1), b(2) and c(9-12). The alpha and beta chains form an alternating ring which encloses part of the gamma chain. CF(1) is attached to CF(0) by a central stalk formed by the gamma and epsilon chains, while a peripheral stalk is formed by the delta and b chains.</text>
</comment>
<comment type="subcellular location">
    <subcellularLocation>
        <location evidence="1">Cell inner membrane</location>
        <topology evidence="1">Multi-pass membrane protein</topology>
    </subcellularLocation>
</comment>
<comment type="similarity">
    <text evidence="1">Belongs to the ATPase A chain family.</text>
</comment>
<proteinExistence type="inferred from homology"/>
<accession>Q1MKT2</accession>
<keyword id="KW-0066">ATP synthesis</keyword>
<keyword id="KW-0997">Cell inner membrane</keyword>
<keyword id="KW-1003">Cell membrane</keyword>
<keyword id="KW-0138">CF(0)</keyword>
<keyword id="KW-0375">Hydrogen ion transport</keyword>
<keyword id="KW-0406">Ion transport</keyword>
<keyword id="KW-0472">Membrane</keyword>
<keyword id="KW-0812">Transmembrane</keyword>
<keyword id="KW-1133">Transmembrane helix</keyword>
<keyword id="KW-0813">Transport</keyword>
<name>ATP6_RHIJ3</name>
<feature type="chain" id="PRO_0000362410" description="ATP synthase subunit a">
    <location>
        <begin position="1"/>
        <end position="250"/>
    </location>
</feature>
<feature type="transmembrane region" description="Helical" evidence="1">
    <location>
        <begin position="29"/>
        <end position="49"/>
    </location>
</feature>
<feature type="transmembrane region" description="Helical" evidence="1">
    <location>
        <begin position="84"/>
        <end position="104"/>
    </location>
</feature>
<feature type="transmembrane region" description="Helical" evidence="1">
    <location>
        <begin position="114"/>
        <end position="134"/>
    </location>
</feature>
<feature type="transmembrane region" description="Helical" evidence="1">
    <location>
        <begin position="143"/>
        <end position="163"/>
    </location>
</feature>
<feature type="transmembrane region" description="Helical" evidence="1">
    <location>
        <begin position="193"/>
        <end position="213"/>
    </location>
</feature>
<feature type="transmembrane region" description="Helical" evidence="1">
    <location>
        <begin position="216"/>
        <end position="236"/>
    </location>
</feature>
<gene>
    <name evidence="1" type="primary">atpB</name>
    <name type="ordered locus">RL0925</name>
</gene>
<dbReference type="EMBL" id="AM236080">
    <property type="protein sequence ID" value="CAK06422.1"/>
    <property type="molecule type" value="Genomic_DNA"/>
</dbReference>
<dbReference type="RefSeq" id="WP_011650667.1">
    <property type="nucleotide sequence ID" value="NC_008380.1"/>
</dbReference>
<dbReference type="SMR" id="Q1MKT2"/>
<dbReference type="EnsemblBacteria" id="CAK06422">
    <property type="protein sequence ID" value="CAK06422"/>
    <property type="gene ID" value="RL0925"/>
</dbReference>
<dbReference type="KEGG" id="rle:RL0925"/>
<dbReference type="eggNOG" id="COG0356">
    <property type="taxonomic scope" value="Bacteria"/>
</dbReference>
<dbReference type="HOGENOM" id="CLU_041018_0_2_5"/>
<dbReference type="Proteomes" id="UP000006575">
    <property type="component" value="Chromosome"/>
</dbReference>
<dbReference type="GO" id="GO:0005886">
    <property type="term" value="C:plasma membrane"/>
    <property type="evidence" value="ECO:0007669"/>
    <property type="project" value="UniProtKB-SubCell"/>
</dbReference>
<dbReference type="GO" id="GO:0045259">
    <property type="term" value="C:proton-transporting ATP synthase complex"/>
    <property type="evidence" value="ECO:0007669"/>
    <property type="project" value="UniProtKB-KW"/>
</dbReference>
<dbReference type="GO" id="GO:0046933">
    <property type="term" value="F:proton-transporting ATP synthase activity, rotational mechanism"/>
    <property type="evidence" value="ECO:0007669"/>
    <property type="project" value="UniProtKB-UniRule"/>
</dbReference>
<dbReference type="CDD" id="cd00310">
    <property type="entry name" value="ATP-synt_Fo_a_6"/>
    <property type="match status" value="1"/>
</dbReference>
<dbReference type="FunFam" id="1.20.120.220:FF:000003">
    <property type="entry name" value="ATP synthase subunit a"/>
    <property type="match status" value="1"/>
</dbReference>
<dbReference type="Gene3D" id="1.20.120.220">
    <property type="entry name" value="ATP synthase, F0 complex, subunit A"/>
    <property type="match status" value="1"/>
</dbReference>
<dbReference type="HAMAP" id="MF_01393">
    <property type="entry name" value="ATP_synth_a_bact"/>
    <property type="match status" value="1"/>
</dbReference>
<dbReference type="InterPro" id="IPR000568">
    <property type="entry name" value="ATP_synth_F0_asu"/>
</dbReference>
<dbReference type="InterPro" id="IPR023011">
    <property type="entry name" value="ATP_synth_F0_asu_AS"/>
</dbReference>
<dbReference type="InterPro" id="IPR045083">
    <property type="entry name" value="ATP_synth_F0_asu_bact/mt"/>
</dbReference>
<dbReference type="InterPro" id="IPR035908">
    <property type="entry name" value="F0_ATP_A_sf"/>
</dbReference>
<dbReference type="NCBIfam" id="TIGR01131">
    <property type="entry name" value="ATP_synt_6_or_A"/>
    <property type="match status" value="1"/>
</dbReference>
<dbReference type="NCBIfam" id="NF004482">
    <property type="entry name" value="PRK05815.2-4"/>
    <property type="match status" value="1"/>
</dbReference>
<dbReference type="PANTHER" id="PTHR11410">
    <property type="entry name" value="ATP SYNTHASE SUBUNIT A"/>
    <property type="match status" value="1"/>
</dbReference>
<dbReference type="PANTHER" id="PTHR11410:SF0">
    <property type="entry name" value="ATP SYNTHASE SUBUNIT A"/>
    <property type="match status" value="1"/>
</dbReference>
<dbReference type="Pfam" id="PF00119">
    <property type="entry name" value="ATP-synt_A"/>
    <property type="match status" value="1"/>
</dbReference>
<dbReference type="PRINTS" id="PR00123">
    <property type="entry name" value="ATPASEA"/>
</dbReference>
<dbReference type="SUPFAM" id="SSF81336">
    <property type="entry name" value="F1F0 ATP synthase subunit A"/>
    <property type="match status" value="1"/>
</dbReference>
<dbReference type="PROSITE" id="PS00449">
    <property type="entry name" value="ATPASE_A"/>
    <property type="match status" value="1"/>
</dbReference>